<gene>
    <name type="primary">CBL5</name>
    <name type="synonym">SCABP4</name>
    <name type="ordered locus">At4g01420</name>
    <name type="ORF">F3D13.2</name>
</gene>
<reference key="1">
    <citation type="journal article" date="1999" name="Plant Cell">
        <title>Novel protein kinases associated with calcineurin B-like calcium sensors in Arabidopsis.</title>
        <authorList>
            <person name="Shi J."/>
            <person name="Kim K.-N."/>
            <person name="Ritz O."/>
            <person name="Albrecht V."/>
            <person name="Gupta R."/>
            <person name="Harter K."/>
            <person name="Luan S."/>
            <person name="Kudla J."/>
        </authorList>
    </citation>
    <scope>NUCLEOTIDE SEQUENCE [MRNA]</scope>
    <source>
        <strain>cv. Columbia</strain>
    </source>
</reference>
<reference key="2">
    <citation type="submission" date="2003-03" db="EMBL/GenBank/DDBJ databases">
        <authorList>
            <person name="Kudla J."/>
        </authorList>
    </citation>
    <scope>SEQUENCE REVISION</scope>
</reference>
<reference key="3">
    <citation type="journal article" date="1999" name="Nature">
        <title>Sequence and analysis of chromosome 4 of the plant Arabidopsis thaliana.</title>
        <authorList>
            <person name="Mayer K.F.X."/>
            <person name="Schueller C."/>
            <person name="Wambutt R."/>
            <person name="Murphy G."/>
            <person name="Volckaert G."/>
            <person name="Pohl T."/>
            <person name="Duesterhoeft A."/>
            <person name="Stiekema W."/>
            <person name="Entian K.-D."/>
            <person name="Terryn N."/>
            <person name="Harris B."/>
            <person name="Ansorge W."/>
            <person name="Brandt P."/>
            <person name="Grivell L.A."/>
            <person name="Rieger M."/>
            <person name="Weichselgartner M."/>
            <person name="de Simone V."/>
            <person name="Obermaier B."/>
            <person name="Mache R."/>
            <person name="Mueller M."/>
            <person name="Kreis M."/>
            <person name="Delseny M."/>
            <person name="Puigdomenech P."/>
            <person name="Watson M."/>
            <person name="Schmidtheini T."/>
            <person name="Reichert B."/>
            <person name="Portetelle D."/>
            <person name="Perez-Alonso M."/>
            <person name="Boutry M."/>
            <person name="Bancroft I."/>
            <person name="Vos P."/>
            <person name="Hoheisel J."/>
            <person name="Zimmermann W."/>
            <person name="Wedler H."/>
            <person name="Ridley P."/>
            <person name="Langham S.-A."/>
            <person name="McCullagh B."/>
            <person name="Bilham L."/>
            <person name="Robben J."/>
            <person name="van der Schueren J."/>
            <person name="Grymonprez B."/>
            <person name="Chuang Y.-J."/>
            <person name="Vandenbussche F."/>
            <person name="Braeken M."/>
            <person name="Weltjens I."/>
            <person name="Voet M."/>
            <person name="Bastiaens I."/>
            <person name="Aert R."/>
            <person name="Defoor E."/>
            <person name="Weitzenegger T."/>
            <person name="Bothe G."/>
            <person name="Ramsperger U."/>
            <person name="Hilbert H."/>
            <person name="Braun M."/>
            <person name="Holzer E."/>
            <person name="Brandt A."/>
            <person name="Peters S."/>
            <person name="van Staveren M."/>
            <person name="Dirkse W."/>
            <person name="Mooijman P."/>
            <person name="Klein Lankhorst R."/>
            <person name="Rose M."/>
            <person name="Hauf J."/>
            <person name="Koetter P."/>
            <person name="Berneiser S."/>
            <person name="Hempel S."/>
            <person name="Feldpausch M."/>
            <person name="Lamberth S."/>
            <person name="Van den Daele H."/>
            <person name="De Keyser A."/>
            <person name="Buysshaert C."/>
            <person name="Gielen J."/>
            <person name="Villarroel R."/>
            <person name="De Clercq R."/>
            <person name="van Montagu M."/>
            <person name="Rogers J."/>
            <person name="Cronin A."/>
            <person name="Quail M.A."/>
            <person name="Bray-Allen S."/>
            <person name="Clark L."/>
            <person name="Doggett J."/>
            <person name="Hall S."/>
            <person name="Kay M."/>
            <person name="Lennard N."/>
            <person name="McLay K."/>
            <person name="Mayes R."/>
            <person name="Pettett A."/>
            <person name="Rajandream M.A."/>
            <person name="Lyne M."/>
            <person name="Benes V."/>
            <person name="Rechmann S."/>
            <person name="Borkova D."/>
            <person name="Bloecker H."/>
            <person name="Scharfe M."/>
            <person name="Grimm M."/>
            <person name="Loehnert T.-H."/>
            <person name="Dose S."/>
            <person name="de Haan M."/>
            <person name="Maarse A.C."/>
            <person name="Schaefer M."/>
            <person name="Mueller-Auer S."/>
            <person name="Gabel C."/>
            <person name="Fuchs M."/>
            <person name="Fartmann B."/>
            <person name="Granderath K."/>
            <person name="Dauner D."/>
            <person name="Herzl A."/>
            <person name="Neumann S."/>
            <person name="Argiriou A."/>
            <person name="Vitale D."/>
            <person name="Liguori R."/>
            <person name="Piravandi E."/>
            <person name="Massenet O."/>
            <person name="Quigley F."/>
            <person name="Clabauld G."/>
            <person name="Muendlein A."/>
            <person name="Felber R."/>
            <person name="Schnabl S."/>
            <person name="Hiller R."/>
            <person name="Schmidt W."/>
            <person name="Lecharny A."/>
            <person name="Aubourg S."/>
            <person name="Chefdor F."/>
            <person name="Cooke R."/>
            <person name="Berger C."/>
            <person name="Monfort A."/>
            <person name="Casacuberta E."/>
            <person name="Gibbons T."/>
            <person name="Weber N."/>
            <person name="Vandenbol M."/>
            <person name="Bargues M."/>
            <person name="Terol J."/>
            <person name="Torres A."/>
            <person name="Perez-Perez A."/>
            <person name="Purnelle B."/>
            <person name="Bent E."/>
            <person name="Johnson S."/>
            <person name="Tacon D."/>
            <person name="Jesse T."/>
            <person name="Heijnen L."/>
            <person name="Schwarz S."/>
            <person name="Scholler P."/>
            <person name="Heber S."/>
            <person name="Francs P."/>
            <person name="Bielke C."/>
            <person name="Frishman D."/>
            <person name="Haase D."/>
            <person name="Lemcke K."/>
            <person name="Mewes H.-W."/>
            <person name="Stocker S."/>
            <person name="Zaccaria P."/>
            <person name="Bevan M."/>
            <person name="Wilson R.K."/>
            <person name="de la Bastide M."/>
            <person name="Habermann K."/>
            <person name="Parnell L."/>
            <person name="Dedhia N."/>
            <person name="Gnoj L."/>
            <person name="Schutz K."/>
            <person name="Huang E."/>
            <person name="Spiegel L."/>
            <person name="Sekhon M."/>
            <person name="Murray J."/>
            <person name="Sheet P."/>
            <person name="Cordes M."/>
            <person name="Abu-Threideh J."/>
            <person name="Stoneking T."/>
            <person name="Kalicki J."/>
            <person name="Graves T."/>
            <person name="Harmon G."/>
            <person name="Edwards J."/>
            <person name="Latreille P."/>
            <person name="Courtney L."/>
            <person name="Cloud J."/>
            <person name="Abbott A."/>
            <person name="Scott K."/>
            <person name="Johnson D."/>
            <person name="Minx P."/>
            <person name="Bentley D."/>
            <person name="Fulton B."/>
            <person name="Miller N."/>
            <person name="Greco T."/>
            <person name="Kemp K."/>
            <person name="Kramer J."/>
            <person name="Fulton L."/>
            <person name="Mardis E."/>
            <person name="Dante M."/>
            <person name="Pepin K."/>
            <person name="Hillier L.W."/>
            <person name="Nelson J."/>
            <person name="Spieth J."/>
            <person name="Ryan E."/>
            <person name="Andrews S."/>
            <person name="Geisel C."/>
            <person name="Layman D."/>
            <person name="Du H."/>
            <person name="Ali J."/>
            <person name="Berghoff A."/>
            <person name="Jones K."/>
            <person name="Drone K."/>
            <person name="Cotton M."/>
            <person name="Joshu C."/>
            <person name="Antonoiu B."/>
            <person name="Zidanic M."/>
            <person name="Strong C."/>
            <person name="Sun H."/>
            <person name="Lamar B."/>
            <person name="Yordan C."/>
            <person name="Ma P."/>
            <person name="Zhong J."/>
            <person name="Preston R."/>
            <person name="Vil D."/>
            <person name="Shekher M."/>
            <person name="Matero A."/>
            <person name="Shah R."/>
            <person name="Swaby I.K."/>
            <person name="O'Shaughnessy A."/>
            <person name="Rodriguez M."/>
            <person name="Hoffman J."/>
            <person name="Till S."/>
            <person name="Granat S."/>
            <person name="Shohdy N."/>
            <person name="Hasegawa A."/>
            <person name="Hameed A."/>
            <person name="Lodhi M."/>
            <person name="Johnson A."/>
            <person name="Chen E."/>
            <person name="Marra M.A."/>
            <person name="Martienssen R."/>
            <person name="McCombie W.R."/>
        </authorList>
    </citation>
    <scope>NUCLEOTIDE SEQUENCE [LARGE SCALE GENOMIC DNA]</scope>
    <source>
        <strain>cv. Columbia</strain>
    </source>
</reference>
<reference key="4">
    <citation type="journal article" date="2017" name="Plant J.">
        <title>Araport11: a complete reannotation of the Arabidopsis thaliana reference genome.</title>
        <authorList>
            <person name="Cheng C.Y."/>
            <person name="Krishnakumar V."/>
            <person name="Chan A.P."/>
            <person name="Thibaud-Nissen F."/>
            <person name="Schobel S."/>
            <person name="Town C.D."/>
        </authorList>
    </citation>
    <scope>GENOME REANNOTATION</scope>
    <source>
        <strain>cv. Columbia</strain>
    </source>
</reference>
<reference key="5">
    <citation type="journal article" date="2000" name="Plant Physiol.">
        <title>Interaction specificity of Arabidopsis calcineurin B-like calcium sensors and their target kinases.</title>
        <authorList>
            <person name="Kim K.-N."/>
            <person name="Cheong Y.H."/>
            <person name="Gupta R."/>
            <person name="Luan S."/>
        </authorList>
    </citation>
    <scope>NUCLEOTIDE SEQUENCE [MRNA] OF 1-192</scope>
    <source>
        <strain>cv. Columbia</strain>
    </source>
</reference>
<reference key="6">
    <citation type="journal article" date="2001" name="EMBO J.">
        <title>The NAF domain defines a novel protein-protein interaction module conserved in Ca(2+)-regulated kinases.</title>
        <authorList>
            <person name="Albrecht V."/>
            <person name="Ritz O."/>
            <person name="Linder S."/>
            <person name="Harter K."/>
            <person name="Kudla J."/>
        </authorList>
    </citation>
    <scope>INTERACTION WITH CIPK2 AND CIPK11</scope>
</reference>
<reference key="7">
    <citation type="journal article" date="2004" name="Plant Physiol.">
        <title>Calcium sensors and their interacting protein kinases: genomics of the Arabidopsis and rice CBL-CIPK signaling networks.</title>
        <authorList>
            <person name="Kolukisaoglu U."/>
            <person name="Weinl S."/>
            <person name="Blazevic D."/>
            <person name="Batistic O."/>
            <person name="Kudla J."/>
        </authorList>
    </citation>
    <scope>GENE FAMILY</scope>
</reference>
<reference key="8">
    <citation type="journal article" date="2006" name="Cell">
        <title>A protein kinase, interacting with two calcineurin B-like proteins, regulates K+ transporter AKT1 in Arabidopsis.</title>
        <authorList>
            <person name="Xu J."/>
            <person name="Li H.-D."/>
            <person name="Chen L.-Q."/>
            <person name="Wang Y."/>
            <person name="Liu L.-L."/>
            <person name="He L."/>
            <person name="Wu W.-H."/>
        </authorList>
    </citation>
    <scope>INTERACTION WITH CIPK23</scope>
</reference>
<reference key="9">
    <citation type="journal article" date="2008" name="Plant Cell">
        <title>Dual fatty acyl modification determines the localization and plasma membrane targeting of CBL/CIPK Ca2+ signaling complexes in Arabidopsis.</title>
        <authorList>
            <person name="Batistic O."/>
            <person name="Sorek N."/>
            <person name="Schueltke S."/>
            <person name="Yalovsky S."/>
            <person name="Kudla J."/>
        </authorList>
    </citation>
    <scope>MYRISTOYLATION AT GLY-2</scope>
</reference>
<reference key="10">
    <citation type="journal article" date="2010" name="Mol. Cells">
        <title>Constitutive overexpression of the calcium sensor CBL5 confers osmotic or drought stress tolerance in Arabidopsis.</title>
        <authorList>
            <person name="Cheong Y.H."/>
            <person name="Sung S.J."/>
            <person name="Kim B.G."/>
            <person name="Pandey G.K."/>
            <person name="Cho J.S."/>
            <person name="Kim K.N."/>
            <person name="Luan S."/>
        </authorList>
    </citation>
    <scope>FUNCTION</scope>
    <scope>TISSUE SPECIFICITY</scope>
</reference>
<reference key="11">
    <citation type="journal article" date="2010" name="Plant J.">
        <title>CBL-mediated targeting of CIPKs facilitates the decoding of calcium signals emanating from distinct cellular stores.</title>
        <authorList>
            <person name="Batistic O."/>
            <person name="Waadt R."/>
            <person name="Steinhorst L."/>
            <person name="Held K."/>
            <person name="Kudla J."/>
        </authorList>
    </citation>
    <scope>SUBCELLULAR LOCATION</scope>
    <scope>DOMAIN</scope>
    <scope>INTERACTION WITH CIPK24</scope>
</reference>
<reference key="12">
    <citation type="journal article" date="2011" name="Mol. Plant">
        <title>Mechanistic analysis of AKT1 regulation by the CBL-CIPK-PP2CA interactions.</title>
        <authorList>
            <person name="Lan W.Z."/>
            <person name="Lee S.C."/>
            <person name="Che Y.F."/>
            <person name="Jiang Y.Q."/>
            <person name="Luan S."/>
        </authorList>
    </citation>
    <scope>INTERACTION WITH PP2CA</scope>
</reference>
<protein>
    <recommendedName>
        <fullName>Calcineurin B-like protein 5</fullName>
    </recommendedName>
    <alternativeName>
        <fullName>SOS3-like calcium-binding protein 4</fullName>
    </alternativeName>
</protein>
<name>CNBL5_ARATH</name>
<dbReference type="EMBL" id="AF192885">
    <property type="protein sequence ID" value="AAG28401.2"/>
    <property type="molecule type" value="mRNA"/>
</dbReference>
<dbReference type="EMBL" id="AF069300">
    <property type="protein sequence ID" value="AAC19290.1"/>
    <property type="status" value="ALT_SEQ"/>
    <property type="molecule type" value="Genomic_DNA"/>
</dbReference>
<dbReference type="EMBL" id="AL161491">
    <property type="protein sequence ID" value="CAB80951.1"/>
    <property type="status" value="ALT_SEQ"/>
    <property type="molecule type" value="Genomic_DNA"/>
</dbReference>
<dbReference type="EMBL" id="CP002687">
    <property type="protein sequence ID" value="AEE82023.1"/>
    <property type="molecule type" value="Genomic_DNA"/>
</dbReference>
<dbReference type="EMBL" id="AF290435">
    <property type="protein sequence ID" value="AAG10060.1"/>
    <property type="molecule type" value="mRNA"/>
</dbReference>
<dbReference type="PIR" id="T01375">
    <property type="entry name" value="T01375"/>
</dbReference>
<dbReference type="RefSeq" id="NP_001329076.1">
    <property type="nucleotide sequence ID" value="NM_001340311.1"/>
</dbReference>
<dbReference type="RefSeq" id="NP_192051.2">
    <property type="nucleotide sequence ID" value="NM_116372.3"/>
</dbReference>
<dbReference type="SMR" id="Q7FZF1"/>
<dbReference type="BioGRID" id="11970">
    <property type="interactions" value="7"/>
</dbReference>
<dbReference type="FunCoup" id="Q7FZF1">
    <property type="interactions" value="321"/>
</dbReference>
<dbReference type="IntAct" id="Q7FZF1">
    <property type="interactions" value="7"/>
</dbReference>
<dbReference type="STRING" id="3702.Q7FZF1"/>
<dbReference type="iPTMnet" id="Q7FZF1"/>
<dbReference type="PaxDb" id="3702-AT4G01420.1"/>
<dbReference type="EnsemblPlants" id="AT4G01420.1">
    <property type="protein sequence ID" value="AT4G01420.1"/>
    <property type="gene ID" value="AT4G01420"/>
</dbReference>
<dbReference type="GeneID" id="826671"/>
<dbReference type="Gramene" id="AT4G01420.1">
    <property type="protein sequence ID" value="AT4G01420.1"/>
    <property type="gene ID" value="AT4G01420"/>
</dbReference>
<dbReference type="KEGG" id="ath:AT4G01420"/>
<dbReference type="Araport" id="AT4G01420"/>
<dbReference type="TAIR" id="AT4G01420">
    <property type="gene designation" value="CBL5"/>
</dbReference>
<dbReference type="eggNOG" id="KOG0034">
    <property type="taxonomic scope" value="Eukaryota"/>
</dbReference>
<dbReference type="HOGENOM" id="CLU_061288_21_0_1"/>
<dbReference type="InParanoid" id="Q7FZF1"/>
<dbReference type="OrthoDB" id="191686at2759"/>
<dbReference type="PhylomeDB" id="Q7FZF1"/>
<dbReference type="PRO" id="PR:Q7FZF1"/>
<dbReference type="Proteomes" id="UP000006548">
    <property type="component" value="Chromosome 4"/>
</dbReference>
<dbReference type="ExpressionAtlas" id="Q7FZF1">
    <property type="expression patterns" value="baseline and differential"/>
</dbReference>
<dbReference type="GO" id="GO:0005737">
    <property type="term" value="C:cytoplasm"/>
    <property type="evidence" value="ECO:0007669"/>
    <property type="project" value="UniProtKB-SubCell"/>
</dbReference>
<dbReference type="GO" id="GO:0005634">
    <property type="term" value="C:nucleus"/>
    <property type="evidence" value="ECO:0007669"/>
    <property type="project" value="UniProtKB-SubCell"/>
</dbReference>
<dbReference type="GO" id="GO:0005509">
    <property type="term" value="F:calcium ion binding"/>
    <property type="evidence" value="ECO:0000250"/>
    <property type="project" value="TAIR"/>
</dbReference>
<dbReference type="GO" id="GO:0019900">
    <property type="term" value="F:kinase binding"/>
    <property type="evidence" value="ECO:0007669"/>
    <property type="project" value="InterPro"/>
</dbReference>
<dbReference type="GO" id="GO:0019722">
    <property type="term" value="P:calcium-mediated signaling"/>
    <property type="evidence" value="ECO:0000304"/>
    <property type="project" value="TAIR"/>
</dbReference>
<dbReference type="GO" id="GO:0006970">
    <property type="term" value="P:response to osmotic stress"/>
    <property type="evidence" value="ECO:0000315"/>
    <property type="project" value="TAIR"/>
</dbReference>
<dbReference type="GO" id="GO:0009651">
    <property type="term" value="P:response to salt stress"/>
    <property type="evidence" value="ECO:0000315"/>
    <property type="project" value="TAIR"/>
</dbReference>
<dbReference type="GO" id="GO:0009414">
    <property type="term" value="P:response to water deprivation"/>
    <property type="evidence" value="ECO:0000315"/>
    <property type="project" value="TAIR"/>
</dbReference>
<dbReference type="CDD" id="cd00051">
    <property type="entry name" value="EFh"/>
    <property type="match status" value="1"/>
</dbReference>
<dbReference type="FunFam" id="1.10.238.10:FF:000073">
    <property type="entry name" value="calcineurin B-like protein 3"/>
    <property type="match status" value="1"/>
</dbReference>
<dbReference type="Gene3D" id="1.10.238.10">
    <property type="entry name" value="EF-hand"/>
    <property type="match status" value="1"/>
</dbReference>
<dbReference type="InterPro" id="IPR045198">
    <property type="entry name" value="CNBL1-10"/>
</dbReference>
<dbReference type="InterPro" id="IPR011992">
    <property type="entry name" value="EF-hand-dom_pair"/>
</dbReference>
<dbReference type="InterPro" id="IPR002048">
    <property type="entry name" value="EF_hand_dom"/>
</dbReference>
<dbReference type="PANTHER" id="PTHR23056">
    <property type="entry name" value="CALCINEURIN B"/>
    <property type="match status" value="1"/>
</dbReference>
<dbReference type="PANTHER" id="PTHR23056:SF108">
    <property type="entry name" value="CALCINEURIN B-LIKE PROTEIN 5"/>
    <property type="match status" value="1"/>
</dbReference>
<dbReference type="Pfam" id="PF13499">
    <property type="entry name" value="EF-hand_7"/>
    <property type="match status" value="1"/>
</dbReference>
<dbReference type="PRINTS" id="PR00450">
    <property type="entry name" value="RECOVERIN"/>
</dbReference>
<dbReference type="SMART" id="SM00054">
    <property type="entry name" value="EFh"/>
    <property type="match status" value="3"/>
</dbReference>
<dbReference type="SUPFAM" id="SSF47473">
    <property type="entry name" value="EF-hand"/>
    <property type="match status" value="1"/>
</dbReference>
<dbReference type="PROSITE" id="PS50222">
    <property type="entry name" value="EF_HAND_2"/>
    <property type="match status" value="3"/>
</dbReference>
<proteinExistence type="evidence at protein level"/>
<accession>Q7FZF1</accession>
<accession>O81328</accession>
<keyword id="KW-0963">Cytoplasm</keyword>
<keyword id="KW-0449">Lipoprotein</keyword>
<keyword id="KW-0519">Myristate</keyword>
<keyword id="KW-0539">Nucleus</keyword>
<keyword id="KW-1185">Reference proteome</keyword>
<keyword id="KW-0677">Repeat</keyword>
<organism>
    <name type="scientific">Arabidopsis thaliana</name>
    <name type="common">Mouse-ear cress</name>
    <dbReference type="NCBI Taxonomy" id="3702"/>
    <lineage>
        <taxon>Eukaryota</taxon>
        <taxon>Viridiplantae</taxon>
        <taxon>Streptophyta</taxon>
        <taxon>Embryophyta</taxon>
        <taxon>Tracheophyta</taxon>
        <taxon>Spermatophyta</taxon>
        <taxon>Magnoliopsida</taxon>
        <taxon>eudicotyledons</taxon>
        <taxon>Gunneridae</taxon>
        <taxon>Pentapetalae</taxon>
        <taxon>rosids</taxon>
        <taxon>malvids</taxon>
        <taxon>Brassicales</taxon>
        <taxon>Brassicaceae</taxon>
        <taxon>Camelineae</taxon>
        <taxon>Arabidopsis</taxon>
    </lineage>
</organism>
<sequence>MGCVCSKQLEGRRQEDISLLASQTFFSEAEVEVLHGLFIKLTSCLSNDNLLTKEKFQFILIKNTKKRSLSAERIFGLFDMRNDGAIDFGEFVHTLNIFHPNSSPRDKAIFAFRLYDTRETGFIEPEEVKEMIIDVLEESELMLSESIIDSIVSKTFEEADWKKDGIIDLEEWENFVATYPLTLKNMTIPFLKDIPRIFPTFLR</sequence>
<feature type="initiator methionine" description="Removed" evidence="2">
    <location>
        <position position="1"/>
    </location>
</feature>
<feature type="chain" id="PRO_0000073506" description="Calcineurin B-like protein 5">
    <location>
        <begin position="2"/>
        <end position="203"/>
    </location>
</feature>
<feature type="domain" description="EF-hand 1" evidence="10">
    <location>
        <begin position="30"/>
        <end position="65"/>
    </location>
</feature>
<feature type="domain" description="EF-hand 2" evidence="3">
    <location>
        <begin position="66"/>
        <end position="101"/>
    </location>
</feature>
<feature type="domain" description="EF-hand 3" evidence="3">
    <location>
        <begin position="103"/>
        <end position="138"/>
    </location>
</feature>
<feature type="domain" description="EF-hand 4" evidence="3">
    <location>
        <begin position="147"/>
        <end position="182"/>
    </location>
</feature>
<feature type="site" description="Involved in dimerization" evidence="1">
    <location>
        <position position="139"/>
    </location>
</feature>
<feature type="lipid moiety-binding region" description="N-myristoyl glycine" evidence="6">
    <location>
        <position position="2"/>
    </location>
</feature>
<evidence type="ECO:0000250" key="1"/>
<evidence type="ECO:0000255" key="2"/>
<evidence type="ECO:0000255" key="3">
    <source>
        <dbReference type="PROSITE-ProRule" id="PRU00448"/>
    </source>
</evidence>
<evidence type="ECO:0000269" key="4">
    <source>
    </source>
</evidence>
<evidence type="ECO:0000269" key="5">
    <source>
    </source>
</evidence>
<evidence type="ECO:0000269" key="6">
    <source>
    </source>
</evidence>
<evidence type="ECO:0000269" key="7">
    <source>
    </source>
</evidence>
<evidence type="ECO:0000269" key="8">
    <source>
    </source>
</evidence>
<evidence type="ECO:0000269" key="9">
    <source>
    </source>
</evidence>
<evidence type="ECO:0000305" key="10"/>
<comment type="function">
    <text evidence="8">Acts as a calcium sensor. CBL proteins interact with CIPK serine-threonine protein kinases. Binding of a CBL protein to the regulatory NAF domain of a CIPK protein lead to the activation of the kinase in a calcium-dependent manner. May function as a positive regulator of salt or drought responses.</text>
</comment>
<comment type="subunit">
    <text evidence="1 4 5 7 9">Homodimer (By similarity). Interacts with PP2CA, CIPK2, CIPK11, CIPK23 and CIPK24.</text>
</comment>
<comment type="subcellular location">
    <subcellularLocation>
        <location evidence="7">Cytoplasm</location>
    </subcellularLocation>
    <subcellularLocation>
        <location evidence="7">Nucleus</location>
    </subcellularLocation>
    <text>Targeted to the cell membrane when interacting with CIPK24.</text>
</comment>
<comment type="tissue specificity">
    <text evidence="8">Expressed in green tissues, but not in the roots.</text>
</comment>
<comment type="domain">
    <text evidence="7">The N-terminal 12 amino acids are sufficient for cell membrane targeting of a heterologous protein.</text>
</comment>
<comment type="PTM">
    <text evidence="1">Both N-myristoylation and calcium-mediated conformational changes are essential for its function.</text>
</comment>
<comment type="similarity">
    <text evidence="10">Belongs to the calcineurin regulatory subunit family.</text>
</comment>
<comment type="sequence caution" evidence="10">
    <conflict type="erroneous gene model prediction">
        <sequence resource="EMBL-CDS" id="AAC19290"/>
    </conflict>
</comment>
<comment type="sequence caution" evidence="10">
    <conflict type="erroneous gene model prediction">
        <sequence resource="EMBL-CDS" id="CAB80951"/>
    </conflict>
</comment>